<evidence type="ECO:0000250" key="1"/>
<evidence type="ECO:0000269" key="2">
    <source>
    </source>
</evidence>
<evidence type="ECO:0000269" key="3">
    <source>
    </source>
</evidence>
<evidence type="ECO:0000305" key="4"/>
<evidence type="ECO:0007829" key="5">
    <source>
        <dbReference type="PDB" id="7A67"/>
    </source>
</evidence>
<proteinExistence type="evidence at protein level"/>
<organism>
    <name type="scientific">Pyrococcus abyssi (strain GE5 / Orsay)</name>
    <dbReference type="NCBI Taxonomy" id="272844"/>
    <lineage>
        <taxon>Archaea</taxon>
        <taxon>Methanobacteriati</taxon>
        <taxon>Methanobacteriota</taxon>
        <taxon>Thermococci</taxon>
        <taxon>Thermococcales</taxon>
        <taxon>Thermococcaceae</taxon>
        <taxon>Pyrococcus</taxon>
    </lineage>
</organism>
<protein>
    <recommendedName>
        <fullName>KEOPS complex subunit Pcc1</fullName>
    </recommendedName>
</protein>
<reference key="1">
    <citation type="journal article" date="2003" name="Mol. Microbiol.">
        <title>An integrated analysis of the genome of the hyperthermophilic archaeon Pyrococcus abyssi.</title>
        <authorList>
            <person name="Cohen G.N."/>
            <person name="Barbe V."/>
            <person name="Flament D."/>
            <person name="Galperin M."/>
            <person name="Heilig R."/>
            <person name="Lecompte O."/>
            <person name="Poch O."/>
            <person name="Prieur D."/>
            <person name="Querellou J."/>
            <person name="Ripp R."/>
            <person name="Thierry J.-C."/>
            <person name="Van der Oost J."/>
            <person name="Weissenbach J."/>
            <person name="Zivanovic Y."/>
            <person name="Forterre P."/>
        </authorList>
    </citation>
    <scope>NUCLEOTIDE SEQUENCE [LARGE SCALE GENOMIC DNA]</scope>
    <source>
        <strain>GE5 / Orsay</strain>
    </source>
</reference>
<reference key="2">
    <citation type="journal article" date="2012" name="Curr. Microbiol.">
        <title>Re-annotation of two hyperthermophilic archaea Pyrococcus abyssi GE5 and Pyrococcus furiosus DSM 3638.</title>
        <authorList>
            <person name="Gao J."/>
            <person name="Wang J."/>
        </authorList>
    </citation>
    <scope>GENOME REANNOTATION</scope>
    <source>
        <strain>GE5 / Orsay</strain>
    </source>
</reference>
<reference key="3">
    <citation type="journal article" date="2013" name="Nucleic Acids Res.">
        <title>In vitro biosynthesis of a universal t6A tRNA modification in Archaea and Eukarya.</title>
        <authorList>
            <person name="Perrochia L."/>
            <person name="Crozat E."/>
            <person name="Hecker A."/>
            <person name="Zhang W."/>
            <person name="Bareille J."/>
            <person name="Collinet B."/>
            <person name="van Tilbeurgh H."/>
            <person name="Forterre P."/>
            <person name="Basta T."/>
        </authorList>
    </citation>
    <scope>FUNCTION IN T(6)A TRNA MODIFICATION</scope>
    <scope>SUBUNIT</scope>
</reference>
<reference key="4">
    <citation type="journal article" date="2013" name="Nucleic Acids Res.">
        <title>Functional assignment of KEOPS/EKC complex subunits in the biosynthesis of the universal t6A tRNA modification.</title>
        <authorList>
            <person name="Perrochia L."/>
            <person name="Guetta D."/>
            <person name="Hecker A."/>
            <person name="Forterre P."/>
            <person name="Basta T."/>
        </authorList>
    </citation>
    <scope>FUNCTION IN THE KEOPS COMPLEX</scope>
    <scope>SUBUNIT</scope>
</reference>
<accession>Q9V1Z9</accession>
<accession>G8ZHQ9</accession>
<feature type="chain" id="PRO_0000430324" description="KEOPS complex subunit Pcc1">
    <location>
        <begin position="1"/>
        <end position="82"/>
    </location>
</feature>
<feature type="strand" evidence="5">
    <location>
        <begin position="6"/>
        <end position="13"/>
    </location>
</feature>
<feature type="helix" evidence="5">
    <location>
        <begin position="17"/>
        <end position="31"/>
    </location>
</feature>
<feature type="strand" evidence="5">
    <location>
        <begin position="41"/>
        <end position="46"/>
    </location>
</feature>
<feature type="strand" evidence="5">
    <location>
        <begin position="49"/>
        <end position="58"/>
    </location>
</feature>
<feature type="helix" evidence="5">
    <location>
        <begin position="59"/>
        <end position="80"/>
    </location>
</feature>
<gene>
    <name type="primary">pcc1</name>
    <name type="ordered locus">PYRAB02750</name>
    <name type="ordered locus">PAB3073</name>
</gene>
<name>PCC1_PYRAB</name>
<comment type="function">
    <text evidence="2 3">Component of the KEOPS complex that is required for the formation of a threonylcarbamoyl group on adenosine at position 37 (t(6)A37) in tRNAs that read codons beginning with adenine. The complex is probably involved in the transfer of the threonylcarbamoyl moiety of threonylcarbamoyl-AMP (TC-AMP) to the N6 group of A37. Pcc1 functions as a dimerization module for the complex.</text>
</comment>
<comment type="subunit">
    <text evidence="2 3">Component of the KEOPS complex that consists of Kae1, Bud32, Cgi121 and Pcc1; the whole complex dimerizes.</text>
</comment>
<comment type="subcellular location">
    <subcellularLocation>
        <location evidence="1">Cytoplasm</location>
    </subcellularLocation>
</comment>
<comment type="similarity">
    <text evidence="4">Belongs to the CTAG/PCC1 family.</text>
</comment>
<comment type="sequence caution" evidence="4">
    <conflict type="erroneous initiation">
        <sequence resource="EMBL-CDS" id="CAB49199"/>
    </conflict>
    <text>Truncated N-terminus.</text>
</comment>
<dbReference type="EMBL" id="AJ248283">
    <property type="protein sequence ID" value="CAB49199.1"/>
    <property type="status" value="ALT_INIT"/>
    <property type="molecule type" value="Genomic_DNA"/>
</dbReference>
<dbReference type="EMBL" id="HE613800">
    <property type="protein sequence ID" value="CCE69652.1"/>
    <property type="molecule type" value="Genomic_DNA"/>
</dbReference>
<dbReference type="PIR" id="H75218">
    <property type="entry name" value="H75218"/>
</dbReference>
<dbReference type="RefSeq" id="WP_048146522.1">
    <property type="nucleotide sequence ID" value="NC_000868.1"/>
</dbReference>
<dbReference type="PDB" id="7A67">
    <property type="method" value="X-ray"/>
    <property type="resolution" value="3.18 A"/>
    <property type="chains" value="A=1-82"/>
</dbReference>
<dbReference type="PDBsum" id="7A67"/>
<dbReference type="SMR" id="Q9V1Z9"/>
<dbReference type="STRING" id="272844.PAB3073"/>
<dbReference type="KEGG" id="pab:PAB3073"/>
<dbReference type="PATRIC" id="fig|272844.11.peg.295"/>
<dbReference type="eggNOG" id="arCOG04414">
    <property type="taxonomic scope" value="Archaea"/>
</dbReference>
<dbReference type="HOGENOM" id="CLU_170076_0_1_2"/>
<dbReference type="OrthoDB" id="8982at2157"/>
<dbReference type="Proteomes" id="UP000000810">
    <property type="component" value="Chromosome"/>
</dbReference>
<dbReference type="Proteomes" id="UP000009139">
    <property type="component" value="Chromosome"/>
</dbReference>
<dbReference type="GO" id="GO:0005737">
    <property type="term" value="C:cytoplasm"/>
    <property type="evidence" value="ECO:0007669"/>
    <property type="project" value="UniProtKB-SubCell"/>
</dbReference>
<dbReference type="GO" id="GO:0000408">
    <property type="term" value="C:EKC/KEOPS complex"/>
    <property type="evidence" value="ECO:0000314"/>
    <property type="project" value="UniProtKB"/>
</dbReference>
<dbReference type="GO" id="GO:0002949">
    <property type="term" value="P:tRNA threonylcarbamoyladenosine modification"/>
    <property type="evidence" value="ECO:0000314"/>
    <property type="project" value="UniProtKB"/>
</dbReference>
<dbReference type="FunFam" id="3.30.310.50:FF:000047">
    <property type="entry name" value="KEOPS complex subunit Pcc1"/>
    <property type="match status" value="1"/>
</dbReference>
<dbReference type="Gene3D" id="3.30.310.50">
    <property type="entry name" value="Alpha-D-phosphohexomutase, C-terminal domain"/>
    <property type="match status" value="1"/>
</dbReference>
<dbReference type="InterPro" id="IPR015419">
    <property type="entry name" value="CTAG/Pcc1"/>
</dbReference>
<dbReference type="InterPro" id="IPR053619">
    <property type="entry name" value="KEOPS_CTAG/PCC1"/>
</dbReference>
<dbReference type="NCBIfam" id="NF040853">
    <property type="entry name" value="KEOPS_Pcc1"/>
    <property type="match status" value="1"/>
</dbReference>
<dbReference type="NCBIfam" id="NF011470">
    <property type="entry name" value="PRK14887.1"/>
    <property type="match status" value="1"/>
</dbReference>
<dbReference type="Pfam" id="PF09341">
    <property type="entry name" value="Pcc1"/>
    <property type="match status" value="1"/>
</dbReference>
<sequence>MKPKRVQGKIVIEFPSEDIAEVVYTSVLYEHVSVPYRRSRVNFRREGRRIVLEIEANDSSAMRGTVNSYLRWIKVALDVLNI</sequence>
<keyword id="KW-0002">3D-structure</keyword>
<keyword id="KW-0963">Cytoplasm</keyword>
<keyword id="KW-0819">tRNA processing</keyword>